<comment type="function">
    <text evidence="1">An essential GTPase that binds both GDP and GTP, with rapid nucleotide exchange. Plays a role in 16S rRNA processing and 30S ribosomal subunit biogenesis and possibly also in cell cycle regulation and energy metabolism.</text>
</comment>
<comment type="subunit">
    <text evidence="1">Monomer.</text>
</comment>
<comment type="subcellular location">
    <subcellularLocation>
        <location>Cytoplasm</location>
    </subcellularLocation>
    <subcellularLocation>
        <location evidence="1">Cell inner membrane</location>
        <topology evidence="1">Peripheral membrane protein</topology>
    </subcellularLocation>
</comment>
<comment type="similarity">
    <text evidence="1 2">Belongs to the TRAFAC class TrmE-Era-EngA-EngB-Septin-like GTPase superfamily. Era GTPase family.</text>
</comment>
<dbReference type="EMBL" id="CP001144">
    <property type="protein sequence ID" value="ACH73879.1"/>
    <property type="molecule type" value="Genomic_DNA"/>
</dbReference>
<dbReference type="RefSeq" id="WP_000102230.1">
    <property type="nucleotide sequence ID" value="NC_011205.1"/>
</dbReference>
<dbReference type="SMR" id="B5FRC4"/>
<dbReference type="KEGG" id="sed:SeD_A2958"/>
<dbReference type="HOGENOM" id="CLU_038009_1_2_6"/>
<dbReference type="Proteomes" id="UP000008322">
    <property type="component" value="Chromosome"/>
</dbReference>
<dbReference type="GO" id="GO:0005829">
    <property type="term" value="C:cytosol"/>
    <property type="evidence" value="ECO:0007669"/>
    <property type="project" value="TreeGrafter"/>
</dbReference>
<dbReference type="GO" id="GO:0005886">
    <property type="term" value="C:plasma membrane"/>
    <property type="evidence" value="ECO:0007669"/>
    <property type="project" value="UniProtKB-SubCell"/>
</dbReference>
<dbReference type="GO" id="GO:0005525">
    <property type="term" value="F:GTP binding"/>
    <property type="evidence" value="ECO:0007669"/>
    <property type="project" value="UniProtKB-UniRule"/>
</dbReference>
<dbReference type="GO" id="GO:0003924">
    <property type="term" value="F:GTPase activity"/>
    <property type="evidence" value="ECO:0007669"/>
    <property type="project" value="UniProtKB-UniRule"/>
</dbReference>
<dbReference type="GO" id="GO:0043024">
    <property type="term" value="F:ribosomal small subunit binding"/>
    <property type="evidence" value="ECO:0007669"/>
    <property type="project" value="TreeGrafter"/>
</dbReference>
<dbReference type="GO" id="GO:0070181">
    <property type="term" value="F:small ribosomal subunit rRNA binding"/>
    <property type="evidence" value="ECO:0007669"/>
    <property type="project" value="UniProtKB-UniRule"/>
</dbReference>
<dbReference type="GO" id="GO:0000028">
    <property type="term" value="P:ribosomal small subunit assembly"/>
    <property type="evidence" value="ECO:0007669"/>
    <property type="project" value="TreeGrafter"/>
</dbReference>
<dbReference type="CDD" id="cd04163">
    <property type="entry name" value="Era"/>
    <property type="match status" value="1"/>
</dbReference>
<dbReference type="CDD" id="cd22534">
    <property type="entry name" value="KH-II_Era"/>
    <property type="match status" value="1"/>
</dbReference>
<dbReference type="FunFam" id="3.30.300.20:FF:000003">
    <property type="entry name" value="GTPase Era"/>
    <property type="match status" value="1"/>
</dbReference>
<dbReference type="FunFam" id="3.40.50.300:FF:000094">
    <property type="entry name" value="GTPase Era"/>
    <property type="match status" value="1"/>
</dbReference>
<dbReference type="Gene3D" id="3.30.300.20">
    <property type="match status" value="1"/>
</dbReference>
<dbReference type="Gene3D" id="3.40.50.300">
    <property type="entry name" value="P-loop containing nucleotide triphosphate hydrolases"/>
    <property type="match status" value="1"/>
</dbReference>
<dbReference type="HAMAP" id="MF_00367">
    <property type="entry name" value="GTPase_Era"/>
    <property type="match status" value="1"/>
</dbReference>
<dbReference type="InterPro" id="IPR030388">
    <property type="entry name" value="G_ERA_dom"/>
</dbReference>
<dbReference type="InterPro" id="IPR006073">
    <property type="entry name" value="GTP-bd"/>
</dbReference>
<dbReference type="InterPro" id="IPR005662">
    <property type="entry name" value="GTPase_Era-like"/>
</dbReference>
<dbReference type="InterPro" id="IPR015946">
    <property type="entry name" value="KH_dom-like_a/b"/>
</dbReference>
<dbReference type="InterPro" id="IPR004044">
    <property type="entry name" value="KH_dom_type_2"/>
</dbReference>
<dbReference type="InterPro" id="IPR009019">
    <property type="entry name" value="KH_sf_prok-type"/>
</dbReference>
<dbReference type="InterPro" id="IPR027417">
    <property type="entry name" value="P-loop_NTPase"/>
</dbReference>
<dbReference type="InterPro" id="IPR005225">
    <property type="entry name" value="Small_GTP-bd"/>
</dbReference>
<dbReference type="NCBIfam" id="TIGR00436">
    <property type="entry name" value="era"/>
    <property type="match status" value="1"/>
</dbReference>
<dbReference type="NCBIfam" id="NF000908">
    <property type="entry name" value="PRK00089.1"/>
    <property type="match status" value="1"/>
</dbReference>
<dbReference type="NCBIfam" id="TIGR00231">
    <property type="entry name" value="small_GTP"/>
    <property type="match status" value="1"/>
</dbReference>
<dbReference type="PANTHER" id="PTHR42698">
    <property type="entry name" value="GTPASE ERA"/>
    <property type="match status" value="1"/>
</dbReference>
<dbReference type="PANTHER" id="PTHR42698:SF1">
    <property type="entry name" value="GTPASE ERA, MITOCHONDRIAL"/>
    <property type="match status" value="1"/>
</dbReference>
<dbReference type="Pfam" id="PF07650">
    <property type="entry name" value="KH_2"/>
    <property type="match status" value="1"/>
</dbReference>
<dbReference type="Pfam" id="PF01926">
    <property type="entry name" value="MMR_HSR1"/>
    <property type="match status" value="1"/>
</dbReference>
<dbReference type="SUPFAM" id="SSF52540">
    <property type="entry name" value="P-loop containing nucleoside triphosphate hydrolases"/>
    <property type="match status" value="1"/>
</dbReference>
<dbReference type="SUPFAM" id="SSF54814">
    <property type="entry name" value="Prokaryotic type KH domain (KH-domain type II)"/>
    <property type="match status" value="1"/>
</dbReference>
<dbReference type="PROSITE" id="PS51713">
    <property type="entry name" value="G_ERA"/>
    <property type="match status" value="1"/>
</dbReference>
<dbReference type="PROSITE" id="PS50823">
    <property type="entry name" value="KH_TYPE_2"/>
    <property type="match status" value="1"/>
</dbReference>
<name>ERA_SALDC</name>
<proteinExistence type="inferred from homology"/>
<keyword id="KW-0997">Cell inner membrane</keyword>
<keyword id="KW-1003">Cell membrane</keyword>
<keyword id="KW-0963">Cytoplasm</keyword>
<keyword id="KW-0342">GTP-binding</keyword>
<keyword id="KW-0472">Membrane</keyword>
<keyword id="KW-0547">Nucleotide-binding</keyword>
<keyword id="KW-0690">Ribosome biogenesis</keyword>
<keyword id="KW-0694">RNA-binding</keyword>
<keyword id="KW-0699">rRNA-binding</keyword>
<evidence type="ECO:0000255" key="1">
    <source>
        <dbReference type="HAMAP-Rule" id="MF_00367"/>
    </source>
</evidence>
<evidence type="ECO:0000255" key="2">
    <source>
        <dbReference type="PROSITE-ProRule" id="PRU01050"/>
    </source>
</evidence>
<reference key="1">
    <citation type="journal article" date="2011" name="J. Bacteriol.">
        <title>Comparative genomics of 28 Salmonella enterica isolates: evidence for CRISPR-mediated adaptive sublineage evolution.</title>
        <authorList>
            <person name="Fricke W.F."/>
            <person name="Mammel M.K."/>
            <person name="McDermott P.F."/>
            <person name="Tartera C."/>
            <person name="White D.G."/>
            <person name="Leclerc J.E."/>
            <person name="Ravel J."/>
            <person name="Cebula T.A."/>
        </authorList>
    </citation>
    <scope>NUCLEOTIDE SEQUENCE [LARGE SCALE GENOMIC DNA]</scope>
    <source>
        <strain>CT_02021853</strain>
    </source>
</reference>
<organism>
    <name type="scientific">Salmonella dublin (strain CT_02021853)</name>
    <dbReference type="NCBI Taxonomy" id="439851"/>
    <lineage>
        <taxon>Bacteria</taxon>
        <taxon>Pseudomonadati</taxon>
        <taxon>Pseudomonadota</taxon>
        <taxon>Gammaproteobacteria</taxon>
        <taxon>Enterobacterales</taxon>
        <taxon>Enterobacteriaceae</taxon>
        <taxon>Salmonella</taxon>
    </lineage>
</organism>
<feature type="chain" id="PRO_1000121348" description="GTPase Era">
    <location>
        <begin position="1"/>
        <end position="301"/>
    </location>
</feature>
<feature type="domain" description="Era-type G" evidence="2">
    <location>
        <begin position="7"/>
        <end position="175"/>
    </location>
</feature>
<feature type="domain" description="KH type-2" evidence="1">
    <location>
        <begin position="206"/>
        <end position="283"/>
    </location>
</feature>
<feature type="region of interest" description="G1" evidence="2">
    <location>
        <begin position="15"/>
        <end position="22"/>
    </location>
</feature>
<feature type="region of interest" description="G2" evidence="2">
    <location>
        <begin position="41"/>
        <end position="45"/>
    </location>
</feature>
<feature type="region of interest" description="G3" evidence="2">
    <location>
        <begin position="62"/>
        <end position="65"/>
    </location>
</feature>
<feature type="region of interest" description="G4" evidence="2">
    <location>
        <begin position="124"/>
        <end position="127"/>
    </location>
</feature>
<feature type="region of interest" description="G5" evidence="2">
    <location>
        <begin position="154"/>
        <end position="156"/>
    </location>
</feature>
<feature type="binding site" evidence="1">
    <location>
        <begin position="15"/>
        <end position="22"/>
    </location>
    <ligand>
        <name>GTP</name>
        <dbReference type="ChEBI" id="CHEBI:37565"/>
    </ligand>
</feature>
<feature type="binding site" evidence="1">
    <location>
        <begin position="62"/>
        <end position="66"/>
    </location>
    <ligand>
        <name>GTP</name>
        <dbReference type="ChEBI" id="CHEBI:37565"/>
    </ligand>
</feature>
<feature type="binding site" evidence="1">
    <location>
        <begin position="124"/>
        <end position="127"/>
    </location>
    <ligand>
        <name>GTP</name>
        <dbReference type="ChEBI" id="CHEBI:37565"/>
    </ligand>
</feature>
<protein>
    <recommendedName>
        <fullName evidence="1">GTPase Era</fullName>
    </recommendedName>
</protein>
<gene>
    <name evidence="1" type="primary">era</name>
    <name type="ordered locus">SeD_A2958</name>
</gene>
<accession>B5FRC4</accession>
<sequence>MSTDKTYCGFIAIVGRPNVGKSTLLNKLLGQKISITSRKAQTTRHRIVGIHTEGPYQAIYVDTPGLHMEEKRAINRLMNKAASSSIGDVELVIFVVEGTRWTPDDEMVLNKLRDGKAPVILAVNKVDNVQEKADLLPHLQFLASQMNFLDIVPISAETGMNVDTIAGIVRKHLPEAIHHFPEDYITDRSQRFMASEIIREKLMRFLGAELPYSVTVEIERFVTNERGGYDINGLILVEREGQKKMVIGNKGAKIKTIGIEARKDMQEMFEAPVHLELWVKVKSGWADDERALRSLGYVDDL</sequence>